<sequence length="527" mass="58606">MSLRPNSRTEARRSRYKVAVDAEEGRRRREDNMVEIRKNKREENLLKKRREGLLQAQQFPSTAAVSHLDKKLETLPELIAGVWSDDSSLQLECTTQFRKLLSIERNPPIEEVIQSGVVPRFVEFLARDDYPQLQFEAAWALTNIASGTSENTKVVIDYGSVPIFIRLLSSPSDDVREQAVWALGNIAGDSPKYRDLVLGHGALVALLAQFNEQAKLSMLRNATWTLSNFCRGKPQPLFEQTKAALPTLGRLIHSNDEEVLTDACWALSYLSDGTNDKIQAVIEAGVCSRLVELLLHSSPSVLIPALRTVGNIVTGDDIQTQVMIDHHALPCLVNLLTQNYKKSIKKEACWTISNITAGNRNQIQIVIEAGIIAPLVYLLQNAEFEIKKEAAWAISNATSGGNHDQIKFLVSQGCIKPLCDLLVCPDPRIVTVCLEGLENILKIGEADKDLGNTEGVNVYAQLIDEAEGLEKIENLQSHDNTEIYEKAVKILETYWLEEEDVPVSLNEDQFEFGGADISLPSGGFNFS</sequence>
<feature type="chain" id="PRO_0000120739" description="Importin subunit alpha">
    <location>
        <begin position="1"/>
        <end position="527"/>
    </location>
</feature>
<feature type="domain" description="IBB" evidence="2">
    <location>
        <begin position="1"/>
        <end position="58"/>
    </location>
</feature>
<feature type="repeat" description="ARM 1">
    <location>
        <begin position="109"/>
        <end position="151"/>
    </location>
</feature>
<feature type="repeat" description="ARM 2">
    <location>
        <begin position="152"/>
        <end position="196"/>
    </location>
</feature>
<feature type="repeat" description="ARM 3">
    <location>
        <begin position="197"/>
        <end position="234"/>
    </location>
</feature>
<feature type="repeat" description="ARM 4">
    <location>
        <begin position="235"/>
        <end position="279"/>
    </location>
</feature>
<feature type="repeat" description="ARM 5">
    <location>
        <begin position="280"/>
        <end position="319"/>
    </location>
</feature>
<feature type="repeat" description="ARM 6">
    <location>
        <begin position="320"/>
        <end position="362"/>
    </location>
</feature>
<feature type="repeat" description="ARM 7">
    <location>
        <begin position="363"/>
        <end position="403"/>
    </location>
</feature>
<feature type="repeat" description="ARM 8">
    <location>
        <begin position="404"/>
        <end position="445"/>
    </location>
</feature>
<organism>
    <name type="scientific">Solanum lycopersicum</name>
    <name type="common">Tomato</name>
    <name type="synonym">Lycopersicon esculentum</name>
    <dbReference type="NCBI Taxonomy" id="4081"/>
    <lineage>
        <taxon>Eukaryota</taxon>
        <taxon>Viridiplantae</taxon>
        <taxon>Streptophyta</taxon>
        <taxon>Embryophyta</taxon>
        <taxon>Tracheophyta</taxon>
        <taxon>Spermatophyta</taxon>
        <taxon>Magnoliopsida</taxon>
        <taxon>eudicotyledons</taxon>
        <taxon>Gunneridae</taxon>
        <taxon>Pentapetalae</taxon>
        <taxon>asterids</taxon>
        <taxon>lamiids</taxon>
        <taxon>Solanales</taxon>
        <taxon>Solanaceae</taxon>
        <taxon>Solanoideae</taxon>
        <taxon>Solaneae</taxon>
        <taxon>Solanum</taxon>
        <taxon>Solanum subgen. Lycopersicon</taxon>
    </lineage>
</organism>
<proteinExistence type="evidence at transcript level"/>
<name>IMA_SOLLC</name>
<protein>
    <recommendedName>
        <fullName>Importin subunit alpha</fullName>
    </recommendedName>
    <alternativeName>
        <fullName>Karyopherin subunit alpha</fullName>
        <shortName>KAP alpha</shortName>
    </alternativeName>
</protein>
<evidence type="ECO:0000250" key="1"/>
<evidence type="ECO:0000255" key="2">
    <source>
        <dbReference type="PROSITE-ProRule" id="PRU00561"/>
    </source>
</evidence>
<evidence type="ECO:0000305" key="3"/>
<accession>O22478</accession>
<dbReference type="EMBL" id="AF017252">
    <property type="protein sequence ID" value="AAC23722.1"/>
    <property type="molecule type" value="mRNA"/>
</dbReference>
<dbReference type="PIR" id="T04329">
    <property type="entry name" value="T04329"/>
</dbReference>
<dbReference type="RefSeq" id="NP_001234006.1">
    <property type="nucleotide sequence ID" value="NM_001247077.1"/>
</dbReference>
<dbReference type="SMR" id="O22478"/>
<dbReference type="STRING" id="4081.O22478"/>
<dbReference type="PaxDb" id="4081-Solyc06g009750.2.1"/>
<dbReference type="GeneID" id="543535"/>
<dbReference type="KEGG" id="sly:543535"/>
<dbReference type="eggNOG" id="KOG0166">
    <property type="taxonomic scope" value="Eukaryota"/>
</dbReference>
<dbReference type="HOGENOM" id="CLU_018084_5_0_1"/>
<dbReference type="InParanoid" id="O22478"/>
<dbReference type="OrthoDB" id="29145at2759"/>
<dbReference type="PhylomeDB" id="O22478"/>
<dbReference type="Proteomes" id="UP000004994">
    <property type="component" value="Unplaced"/>
</dbReference>
<dbReference type="GO" id="GO:0005737">
    <property type="term" value="C:cytoplasm"/>
    <property type="evidence" value="ECO:0007669"/>
    <property type="project" value="UniProtKB-SubCell"/>
</dbReference>
<dbReference type="GO" id="GO:0005634">
    <property type="term" value="C:nucleus"/>
    <property type="evidence" value="ECO:0000318"/>
    <property type="project" value="GO_Central"/>
</dbReference>
<dbReference type="GO" id="GO:0061608">
    <property type="term" value="F:nuclear import signal receptor activity"/>
    <property type="evidence" value="ECO:0000318"/>
    <property type="project" value="GO_Central"/>
</dbReference>
<dbReference type="GO" id="GO:0008139">
    <property type="term" value="F:nuclear localization sequence binding"/>
    <property type="evidence" value="ECO:0000318"/>
    <property type="project" value="GO_Central"/>
</dbReference>
<dbReference type="GO" id="GO:0006607">
    <property type="term" value="P:NLS-bearing protein import into nucleus"/>
    <property type="evidence" value="ECO:0000318"/>
    <property type="project" value="GO_Central"/>
</dbReference>
<dbReference type="FunFam" id="1.20.5.690:FF:000002">
    <property type="entry name" value="Importin subunit alpha"/>
    <property type="match status" value="1"/>
</dbReference>
<dbReference type="FunFam" id="1.25.10.10:FF:000040">
    <property type="entry name" value="Importin subunit alpha"/>
    <property type="match status" value="1"/>
</dbReference>
<dbReference type="Gene3D" id="1.20.5.690">
    <property type="entry name" value="Importin-alpha, importin-beta-binding domain"/>
    <property type="match status" value="1"/>
</dbReference>
<dbReference type="Gene3D" id="1.25.10.10">
    <property type="entry name" value="Leucine-rich Repeat Variant"/>
    <property type="match status" value="1"/>
</dbReference>
<dbReference type="InterPro" id="IPR011989">
    <property type="entry name" value="ARM-like"/>
</dbReference>
<dbReference type="InterPro" id="IPR016024">
    <property type="entry name" value="ARM-type_fold"/>
</dbReference>
<dbReference type="InterPro" id="IPR032413">
    <property type="entry name" value="Arm_3"/>
</dbReference>
<dbReference type="InterPro" id="IPR000225">
    <property type="entry name" value="Armadillo"/>
</dbReference>
<dbReference type="InterPro" id="IPR002652">
    <property type="entry name" value="Importin-a_IBB"/>
</dbReference>
<dbReference type="InterPro" id="IPR036975">
    <property type="entry name" value="Importin-a_IBB_sf"/>
</dbReference>
<dbReference type="InterPro" id="IPR024931">
    <property type="entry name" value="Importin_alpha"/>
</dbReference>
<dbReference type="PANTHER" id="PTHR23316">
    <property type="entry name" value="IMPORTIN ALPHA"/>
    <property type="match status" value="1"/>
</dbReference>
<dbReference type="Pfam" id="PF00514">
    <property type="entry name" value="Arm"/>
    <property type="match status" value="8"/>
</dbReference>
<dbReference type="Pfam" id="PF16186">
    <property type="entry name" value="Arm_3"/>
    <property type="match status" value="1"/>
</dbReference>
<dbReference type="Pfam" id="PF01749">
    <property type="entry name" value="IBB"/>
    <property type="match status" value="1"/>
</dbReference>
<dbReference type="PIRSF" id="PIRSF005673">
    <property type="entry name" value="Importin_alpha"/>
    <property type="match status" value="1"/>
</dbReference>
<dbReference type="SMART" id="SM00185">
    <property type="entry name" value="ARM"/>
    <property type="match status" value="8"/>
</dbReference>
<dbReference type="SUPFAM" id="SSF48371">
    <property type="entry name" value="ARM repeat"/>
    <property type="match status" value="1"/>
</dbReference>
<dbReference type="PROSITE" id="PS50176">
    <property type="entry name" value="ARM_REPEAT"/>
    <property type="match status" value="5"/>
</dbReference>
<dbReference type="PROSITE" id="PS51214">
    <property type="entry name" value="IBB"/>
    <property type="match status" value="1"/>
</dbReference>
<comment type="function">
    <text evidence="1">Binds specifically and directly to substrates containing either a simple or bipartite NLS motif. Promotes docking of import substrates to the nuclear envelope. Seems to act as a cytosolic receptor for both simple and bipartite NLS motifs (By similarity).</text>
</comment>
<comment type="subunit">
    <text evidence="1">Forms a complex with importin subunit beta-1.</text>
</comment>
<comment type="subcellular location">
    <subcellularLocation>
        <location evidence="1">Cytoplasm</location>
    </subcellularLocation>
</comment>
<comment type="similarity">
    <text evidence="3">Belongs to the importin alpha family.</text>
</comment>
<reference key="1">
    <citation type="submission" date="1998-06" db="EMBL/GenBank/DDBJ databases">
        <authorList>
            <person name="Kunik T."/>
            <person name="Mizrachy L."/>
            <person name="Citovsky V."/>
            <person name="Gafni Y."/>
        </authorList>
    </citation>
    <scope>NUCLEOTIDE SEQUENCE [MRNA]</scope>
</reference>
<keyword id="KW-0963">Cytoplasm</keyword>
<keyword id="KW-0653">Protein transport</keyword>
<keyword id="KW-1185">Reference proteome</keyword>
<keyword id="KW-0677">Repeat</keyword>
<keyword id="KW-0813">Transport</keyword>